<evidence type="ECO:0000255" key="1">
    <source>
        <dbReference type="HAMAP-Rule" id="MF_01576"/>
    </source>
</evidence>
<sequence>MSARILDGRVLAQALRHELAAQIAELRERIDRAPVIAVVQVGEDPAATRYVRSIDRLSQSLGAACRTIILPDVVTQAELEATVSRLSADDRVDGILLQLPLPAGLSLDGVLSRLIPEKDLDGIHPINAGLLAQGRPALIPNTPAGGMELLRRYEIEVRGKRAAVVGRSAIVGRPMALLLLQADATVTICHSRTSDLGAVLRECDIIVAAAGRPQLITAEMIKPGATIIDFGTNVLADGSMVGDVDFAAAVEVAGAITPVPGGTGPVTNVMLIQNLIKATRSRLGI</sequence>
<comment type="function">
    <text evidence="1">Catalyzes the oxidation of 5,10-methylenetetrahydrofolate to 5,10-methenyltetrahydrofolate and then the hydrolysis of 5,10-methenyltetrahydrofolate to 10-formyltetrahydrofolate.</text>
</comment>
<comment type="catalytic activity">
    <reaction evidence="1">
        <text>(6R)-5,10-methylene-5,6,7,8-tetrahydrofolate + NADP(+) = (6R)-5,10-methenyltetrahydrofolate + NADPH</text>
        <dbReference type="Rhea" id="RHEA:22812"/>
        <dbReference type="ChEBI" id="CHEBI:15636"/>
        <dbReference type="ChEBI" id="CHEBI:57455"/>
        <dbReference type="ChEBI" id="CHEBI:57783"/>
        <dbReference type="ChEBI" id="CHEBI:58349"/>
        <dbReference type="EC" id="1.5.1.5"/>
    </reaction>
</comment>
<comment type="catalytic activity">
    <reaction evidence="1">
        <text>(6R)-5,10-methenyltetrahydrofolate + H2O = (6R)-10-formyltetrahydrofolate + H(+)</text>
        <dbReference type="Rhea" id="RHEA:23700"/>
        <dbReference type="ChEBI" id="CHEBI:15377"/>
        <dbReference type="ChEBI" id="CHEBI:15378"/>
        <dbReference type="ChEBI" id="CHEBI:57455"/>
        <dbReference type="ChEBI" id="CHEBI:195366"/>
        <dbReference type="EC" id="3.5.4.9"/>
    </reaction>
</comment>
<comment type="pathway">
    <text evidence="1">One-carbon metabolism; tetrahydrofolate interconversion.</text>
</comment>
<comment type="subunit">
    <text evidence="1">Homodimer.</text>
</comment>
<comment type="similarity">
    <text evidence="1">Belongs to the tetrahydrofolate dehydrogenase/cyclohydrolase family.</text>
</comment>
<keyword id="KW-0028">Amino-acid biosynthesis</keyword>
<keyword id="KW-0368">Histidine biosynthesis</keyword>
<keyword id="KW-0378">Hydrolase</keyword>
<keyword id="KW-0486">Methionine biosynthesis</keyword>
<keyword id="KW-0511">Multifunctional enzyme</keyword>
<keyword id="KW-0521">NADP</keyword>
<keyword id="KW-0554">One-carbon metabolism</keyword>
<keyword id="KW-0560">Oxidoreductase</keyword>
<keyword id="KW-0658">Purine biosynthesis</keyword>
<dbReference type="EC" id="1.5.1.5" evidence="1"/>
<dbReference type="EC" id="3.5.4.9" evidence="1"/>
<dbReference type="EMBL" id="CP001337">
    <property type="protein sequence ID" value="ACL23013.1"/>
    <property type="molecule type" value="Genomic_DNA"/>
</dbReference>
<dbReference type="RefSeq" id="WP_012615379.1">
    <property type="nucleotide sequence ID" value="NC_011831.1"/>
</dbReference>
<dbReference type="SMR" id="B8GC39"/>
<dbReference type="STRING" id="326427.Cagg_0060"/>
<dbReference type="KEGG" id="cag:Cagg_0060"/>
<dbReference type="eggNOG" id="COG0190">
    <property type="taxonomic scope" value="Bacteria"/>
</dbReference>
<dbReference type="HOGENOM" id="CLU_034045_2_1_0"/>
<dbReference type="OrthoDB" id="9803580at2"/>
<dbReference type="UniPathway" id="UPA00193"/>
<dbReference type="Proteomes" id="UP000002508">
    <property type="component" value="Chromosome"/>
</dbReference>
<dbReference type="GO" id="GO:0005829">
    <property type="term" value="C:cytosol"/>
    <property type="evidence" value="ECO:0007669"/>
    <property type="project" value="TreeGrafter"/>
</dbReference>
<dbReference type="GO" id="GO:0004477">
    <property type="term" value="F:methenyltetrahydrofolate cyclohydrolase activity"/>
    <property type="evidence" value="ECO:0007669"/>
    <property type="project" value="UniProtKB-UniRule"/>
</dbReference>
<dbReference type="GO" id="GO:0004488">
    <property type="term" value="F:methylenetetrahydrofolate dehydrogenase (NADP+) activity"/>
    <property type="evidence" value="ECO:0007669"/>
    <property type="project" value="UniProtKB-UniRule"/>
</dbReference>
<dbReference type="GO" id="GO:0000105">
    <property type="term" value="P:L-histidine biosynthetic process"/>
    <property type="evidence" value="ECO:0007669"/>
    <property type="project" value="UniProtKB-KW"/>
</dbReference>
<dbReference type="GO" id="GO:0009086">
    <property type="term" value="P:methionine biosynthetic process"/>
    <property type="evidence" value="ECO:0007669"/>
    <property type="project" value="UniProtKB-KW"/>
</dbReference>
<dbReference type="GO" id="GO:0006164">
    <property type="term" value="P:purine nucleotide biosynthetic process"/>
    <property type="evidence" value="ECO:0007669"/>
    <property type="project" value="UniProtKB-KW"/>
</dbReference>
<dbReference type="GO" id="GO:0035999">
    <property type="term" value="P:tetrahydrofolate interconversion"/>
    <property type="evidence" value="ECO:0007669"/>
    <property type="project" value="UniProtKB-UniRule"/>
</dbReference>
<dbReference type="CDD" id="cd01080">
    <property type="entry name" value="NAD_bind_m-THF_DH_Cyclohyd"/>
    <property type="match status" value="1"/>
</dbReference>
<dbReference type="FunFam" id="3.40.50.720:FF:000094">
    <property type="entry name" value="Bifunctional protein FolD"/>
    <property type="match status" value="1"/>
</dbReference>
<dbReference type="FunFam" id="3.40.50.10860:FF:000005">
    <property type="entry name" value="C-1-tetrahydrofolate synthase, cytoplasmic, putative"/>
    <property type="match status" value="1"/>
</dbReference>
<dbReference type="Gene3D" id="3.40.50.10860">
    <property type="entry name" value="Leucine Dehydrogenase, chain A, domain 1"/>
    <property type="match status" value="1"/>
</dbReference>
<dbReference type="Gene3D" id="3.40.50.720">
    <property type="entry name" value="NAD(P)-binding Rossmann-like Domain"/>
    <property type="match status" value="1"/>
</dbReference>
<dbReference type="HAMAP" id="MF_01576">
    <property type="entry name" value="THF_DHG_CYH"/>
    <property type="match status" value="1"/>
</dbReference>
<dbReference type="InterPro" id="IPR046346">
    <property type="entry name" value="Aminoacid_DH-like_N_sf"/>
</dbReference>
<dbReference type="InterPro" id="IPR036291">
    <property type="entry name" value="NAD(P)-bd_dom_sf"/>
</dbReference>
<dbReference type="InterPro" id="IPR000672">
    <property type="entry name" value="THF_DH/CycHdrlase"/>
</dbReference>
<dbReference type="InterPro" id="IPR020630">
    <property type="entry name" value="THF_DH/CycHdrlase_cat_dom"/>
</dbReference>
<dbReference type="InterPro" id="IPR020631">
    <property type="entry name" value="THF_DH/CycHdrlase_NAD-bd_dom"/>
</dbReference>
<dbReference type="PANTHER" id="PTHR48099:SF5">
    <property type="entry name" value="C-1-TETRAHYDROFOLATE SYNTHASE, CYTOPLASMIC"/>
    <property type="match status" value="1"/>
</dbReference>
<dbReference type="PANTHER" id="PTHR48099">
    <property type="entry name" value="C-1-TETRAHYDROFOLATE SYNTHASE, CYTOPLASMIC-RELATED"/>
    <property type="match status" value="1"/>
</dbReference>
<dbReference type="Pfam" id="PF00763">
    <property type="entry name" value="THF_DHG_CYH"/>
    <property type="match status" value="1"/>
</dbReference>
<dbReference type="Pfam" id="PF02882">
    <property type="entry name" value="THF_DHG_CYH_C"/>
    <property type="match status" value="1"/>
</dbReference>
<dbReference type="PRINTS" id="PR00085">
    <property type="entry name" value="THFDHDRGNASE"/>
</dbReference>
<dbReference type="SUPFAM" id="SSF53223">
    <property type="entry name" value="Aminoacid dehydrogenase-like, N-terminal domain"/>
    <property type="match status" value="1"/>
</dbReference>
<dbReference type="SUPFAM" id="SSF51735">
    <property type="entry name" value="NAD(P)-binding Rossmann-fold domains"/>
    <property type="match status" value="1"/>
</dbReference>
<proteinExistence type="inferred from homology"/>
<organism>
    <name type="scientific">Chloroflexus aggregans (strain MD-66 / DSM 9485)</name>
    <dbReference type="NCBI Taxonomy" id="326427"/>
    <lineage>
        <taxon>Bacteria</taxon>
        <taxon>Bacillati</taxon>
        <taxon>Chloroflexota</taxon>
        <taxon>Chloroflexia</taxon>
        <taxon>Chloroflexales</taxon>
        <taxon>Chloroflexineae</taxon>
        <taxon>Chloroflexaceae</taxon>
        <taxon>Chloroflexus</taxon>
    </lineage>
</organism>
<protein>
    <recommendedName>
        <fullName evidence="1">Bifunctional protein FolD</fullName>
    </recommendedName>
    <domain>
        <recommendedName>
            <fullName evidence="1">Methylenetetrahydrofolate dehydrogenase</fullName>
            <ecNumber evidence="1">1.5.1.5</ecNumber>
        </recommendedName>
    </domain>
    <domain>
        <recommendedName>
            <fullName evidence="1">Methenyltetrahydrofolate cyclohydrolase</fullName>
            <ecNumber evidence="1">3.5.4.9</ecNumber>
        </recommendedName>
    </domain>
</protein>
<gene>
    <name evidence="1" type="primary">folD</name>
    <name type="ordered locus">Cagg_0060</name>
</gene>
<feature type="chain" id="PRO_1000185602" description="Bifunctional protein FolD">
    <location>
        <begin position="1"/>
        <end position="285"/>
    </location>
</feature>
<feature type="binding site" evidence="1">
    <location>
        <begin position="166"/>
        <end position="168"/>
    </location>
    <ligand>
        <name>NADP(+)</name>
        <dbReference type="ChEBI" id="CHEBI:58349"/>
    </ligand>
</feature>
<feature type="binding site" evidence="1">
    <location>
        <position position="191"/>
    </location>
    <ligand>
        <name>NADP(+)</name>
        <dbReference type="ChEBI" id="CHEBI:58349"/>
    </ligand>
</feature>
<feature type="binding site" evidence="1">
    <location>
        <position position="232"/>
    </location>
    <ligand>
        <name>NADP(+)</name>
        <dbReference type="ChEBI" id="CHEBI:58349"/>
    </ligand>
</feature>
<reference key="1">
    <citation type="submission" date="2008-12" db="EMBL/GenBank/DDBJ databases">
        <title>Complete sequence of Chloroflexus aggregans DSM 9485.</title>
        <authorList>
            <consortium name="US DOE Joint Genome Institute"/>
            <person name="Lucas S."/>
            <person name="Copeland A."/>
            <person name="Lapidus A."/>
            <person name="Glavina del Rio T."/>
            <person name="Dalin E."/>
            <person name="Tice H."/>
            <person name="Pitluck S."/>
            <person name="Foster B."/>
            <person name="Larimer F."/>
            <person name="Land M."/>
            <person name="Hauser L."/>
            <person name="Kyrpides N."/>
            <person name="Mikhailova N."/>
            <person name="Bryant D.A."/>
            <person name="Richardson P."/>
        </authorList>
    </citation>
    <scope>NUCLEOTIDE SEQUENCE [LARGE SCALE GENOMIC DNA]</scope>
    <source>
        <strain>MD-66 / DSM 9485</strain>
    </source>
</reference>
<name>FOLD_CHLAD</name>
<accession>B8GC39</accession>